<protein>
    <recommendedName>
        <fullName evidence="3">Selenoprotein K</fullName>
        <shortName evidence="3">SelK</shortName>
    </recommendedName>
</protein>
<gene>
    <name evidence="3" type="primary">SELENOK</name>
</gene>
<comment type="function">
    <text evidence="2 3">Required for Ca(2+) flux in immune cells and plays a role in T-cell proliferation and in T-cell and neutrophil migration (By similarity). Involved in endoplasmic reticulum-associated degradation (ERAD) of soluble glycosylated proteins (By similarity). Required for palmitoylation and cell surface expression of CD36 and involved in macrophage uptake of low-density lipoprotein and in foam cell formation (By similarity). Together with ZDHHC6, required for palmitoylation of ITPR1 in immune cells, leading to regulate ITPR1 stability and function. Plays a role in protection of cells from ER stress-induced apoptosis. Protects cells from oxidative stress when overexpressed in cardiomyocytes (By similarity).</text>
</comment>
<comment type="subunit">
    <text evidence="3">Interacts with DERL1, DERL2, DERL3 and SELENOS. The SELENOK-SELENOS complex interacts with VCP. Interacts with ZDHHC6.</text>
</comment>
<comment type="subcellular location">
    <subcellularLocation>
        <location evidence="3">Endoplasmic reticulum membrane</location>
        <topology evidence="4">Single-pass membrane protein</topology>
    </subcellularLocation>
    <subcellularLocation>
        <location evidence="3">Cell membrane</location>
        <topology evidence="4">Single-pass membrane protein</topology>
    </subcellularLocation>
    <text evidence="3">Probably mainly localized in the ER.</text>
</comment>
<comment type="PTM">
    <text evidence="2">Cleaved by CAPN2/m-calpain in resting macrophages but not in activated macrophages. Macrophage activation up-regulates expression of the calpain inhibitor CAST/calpastatin, resulting in inhibition of CAPN2 activity (By similarity).</text>
</comment>
<comment type="PTM">
    <text evidence="3">Truncated SELENOK proteins produced by failed UGA/Sec decoding are ubiquitinated by the CRL2(KLHDC2) complex, which recognizes the diglycine (Gly-Gly) at the C-terminus of truncated SELENOK proteins.</text>
</comment>
<comment type="similarity">
    <text evidence="6">Belongs to the selenoprotein K family.</text>
</comment>
<comment type="sequence caution" evidence="6">
    <conflict type="erroneous termination">
        <sequence resource="EMBL-CDS" id="AAI08151"/>
    </conflict>
    <text>Truncated C-terminus.</text>
</comment>
<sequence length="95" mass="10805">MVYISNGQVLDSRSQSPWRLSFITDFFWGIAEFVVLFFRTLLQQDVKKRRGYGSSSDSRYDDGRGPPGNPPRRRMGRINHLQGPNPPPMAGGUGR</sequence>
<reference key="1">
    <citation type="submission" date="2005-10" db="EMBL/GenBank/DDBJ databases">
        <authorList>
            <consortium name="NIH - Mammalian Gene Collection (MGC) project"/>
        </authorList>
    </citation>
    <scope>NUCLEOTIDE SEQUENCE [LARGE SCALE MRNA]</scope>
    <source>
        <strain>Crossbred X Angus</strain>
        <tissue>Liver</tissue>
    </source>
</reference>
<feature type="chain" id="PRO_0000290202" description="Selenoprotein K">
    <location>
        <begin position="1"/>
        <end position="95"/>
    </location>
</feature>
<feature type="transmembrane region" description="Helical" evidence="4">
    <location>
        <begin position="20"/>
        <end position="42"/>
    </location>
</feature>
<feature type="region of interest" description="Disordered" evidence="5">
    <location>
        <begin position="47"/>
        <end position="95"/>
    </location>
</feature>
<feature type="site" description="Cleavage; by CAPN2" evidence="1">
    <location>
        <begin position="82"/>
        <end position="83"/>
    </location>
</feature>
<feature type="non-standard amino acid" description="Selenocysteine" evidence="1">
    <location>
        <position position="93"/>
    </location>
</feature>
<proteinExistence type="inferred from homology"/>
<name>SELK_BOVIN</name>
<accession>Q32PE3</accession>
<evidence type="ECO:0000250" key="1"/>
<evidence type="ECO:0000250" key="2">
    <source>
        <dbReference type="UniProtKB" id="Q9JLJ1"/>
    </source>
</evidence>
<evidence type="ECO:0000250" key="3">
    <source>
        <dbReference type="UniProtKB" id="Q9Y6D0"/>
    </source>
</evidence>
<evidence type="ECO:0000255" key="4"/>
<evidence type="ECO:0000256" key="5">
    <source>
        <dbReference type="SAM" id="MobiDB-lite"/>
    </source>
</evidence>
<evidence type="ECO:0000305" key="6"/>
<organism>
    <name type="scientific">Bos taurus</name>
    <name type="common">Bovine</name>
    <dbReference type="NCBI Taxonomy" id="9913"/>
    <lineage>
        <taxon>Eukaryota</taxon>
        <taxon>Metazoa</taxon>
        <taxon>Chordata</taxon>
        <taxon>Craniata</taxon>
        <taxon>Vertebrata</taxon>
        <taxon>Euteleostomi</taxon>
        <taxon>Mammalia</taxon>
        <taxon>Eutheria</taxon>
        <taxon>Laurasiatheria</taxon>
        <taxon>Artiodactyla</taxon>
        <taxon>Ruminantia</taxon>
        <taxon>Pecora</taxon>
        <taxon>Bovidae</taxon>
        <taxon>Bovinae</taxon>
        <taxon>Bos</taxon>
    </lineage>
</organism>
<keyword id="KW-0106">Calcium</keyword>
<keyword id="KW-0109">Calcium transport</keyword>
<keyword id="KW-1003">Cell membrane</keyword>
<keyword id="KW-0256">Endoplasmic reticulum</keyword>
<keyword id="KW-0406">Ion transport</keyword>
<keyword id="KW-0472">Membrane</keyword>
<keyword id="KW-1185">Reference proteome</keyword>
<keyword id="KW-0712">Selenocysteine</keyword>
<keyword id="KW-0812">Transmembrane</keyword>
<keyword id="KW-1133">Transmembrane helix</keyword>
<keyword id="KW-0813">Transport</keyword>
<keyword id="KW-0832">Ubl conjugation</keyword>
<dbReference type="EMBL" id="BC108150">
    <property type="protein sequence ID" value="AAI08151.1"/>
    <property type="status" value="ALT_SEQ"/>
    <property type="molecule type" value="mRNA"/>
</dbReference>
<dbReference type="RefSeq" id="NP_001032566.2">
    <property type="nucleotide sequence ID" value="NM_001037489.3"/>
</dbReference>
<dbReference type="FunCoup" id="Q32PE3">
    <property type="interactions" value="356"/>
</dbReference>
<dbReference type="STRING" id="9913.ENSBTAP00000043281"/>
<dbReference type="PaxDb" id="9913-ENSBTAP00000043281"/>
<dbReference type="GeneID" id="615114"/>
<dbReference type="KEGG" id="bta:615114"/>
<dbReference type="CTD" id="58515"/>
<dbReference type="eggNOG" id="ENOG502S3PW">
    <property type="taxonomic scope" value="Eukaryota"/>
</dbReference>
<dbReference type="HOGENOM" id="CLU_182590_0_1_1"/>
<dbReference type="InParanoid" id="Q32PE3"/>
<dbReference type="OrthoDB" id="167295at2759"/>
<dbReference type="TreeFam" id="TF328380"/>
<dbReference type="Proteomes" id="UP000009136">
    <property type="component" value="Unplaced"/>
</dbReference>
<dbReference type="GO" id="GO:0005783">
    <property type="term" value="C:endoplasmic reticulum"/>
    <property type="evidence" value="ECO:0000250"/>
    <property type="project" value="UniProtKB"/>
</dbReference>
<dbReference type="GO" id="GO:0005789">
    <property type="term" value="C:endoplasmic reticulum membrane"/>
    <property type="evidence" value="ECO:0000250"/>
    <property type="project" value="UniProtKB"/>
</dbReference>
<dbReference type="GO" id="GO:0005794">
    <property type="term" value="C:Golgi apparatus"/>
    <property type="evidence" value="ECO:0000318"/>
    <property type="project" value="GO_Central"/>
</dbReference>
<dbReference type="GO" id="GO:0005886">
    <property type="term" value="C:plasma membrane"/>
    <property type="evidence" value="ECO:0007669"/>
    <property type="project" value="UniProtKB-SubCell"/>
</dbReference>
<dbReference type="GO" id="GO:0006816">
    <property type="term" value="P:calcium ion transport"/>
    <property type="evidence" value="ECO:0000318"/>
    <property type="project" value="GO_Central"/>
</dbReference>
<dbReference type="GO" id="GO:0032469">
    <property type="term" value="P:endoplasmic reticulum calcium ion homeostasis"/>
    <property type="evidence" value="ECO:0000318"/>
    <property type="project" value="GO_Central"/>
</dbReference>
<dbReference type="GO" id="GO:0018345">
    <property type="term" value="P:protein palmitoylation"/>
    <property type="evidence" value="ECO:0000250"/>
    <property type="project" value="UniProtKB"/>
</dbReference>
<dbReference type="InterPro" id="IPR024491">
    <property type="entry name" value="Se_SelK/SelG"/>
</dbReference>
<dbReference type="PANTHER" id="PTHR16875">
    <property type="entry name" value="SELENOPROTEIN K"/>
    <property type="match status" value="1"/>
</dbReference>
<dbReference type="PANTHER" id="PTHR16875:SF0">
    <property type="entry name" value="SELENOPROTEIN K"/>
    <property type="match status" value="1"/>
</dbReference>
<dbReference type="Pfam" id="PF10961">
    <property type="entry name" value="SelK_SelG"/>
    <property type="match status" value="1"/>
</dbReference>